<name>RNPH_SERP5</name>
<feature type="chain" id="PRO_1000061137" description="Ribonuclease PH">
    <location>
        <begin position="1"/>
        <end position="238"/>
    </location>
</feature>
<feature type="binding site" evidence="1">
    <location>
        <position position="86"/>
    </location>
    <ligand>
        <name>phosphate</name>
        <dbReference type="ChEBI" id="CHEBI:43474"/>
        <note>substrate</note>
    </ligand>
</feature>
<feature type="binding site" evidence="1">
    <location>
        <begin position="124"/>
        <end position="126"/>
    </location>
    <ligand>
        <name>phosphate</name>
        <dbReference type="ChEBI" id="CHEBI:43474"/>
        <note>substrate</note>
    </ligand>
</feature>
<dbReference type="EC" id="2.7.7.56" evidence="1"/>
<dbReference type="EMBL" id="CP000826">
    <property type="protein sequence ID" value="ABV43940.1"/>
    <property type="molecule type" value="Genomic_DNA"/>
</dbReference>
<dbReference type="SMR" id="A8GLF0"/>
<dbReference type="STRING" id="399741.Spro_4847"/>
<dbReference type="KEGG" id="spe:Spro_4847"/>
<dbReference type="eggNOG" id="COG0689">
    <property type="taxonomic scope" value="Bacteria"/>
</dbReference>
<dbReference type="HOGENOM" id="CLU_050858_0_0_6"/>
<dbReference type="OrthoDB" id="9802265at2"/>
<dbReference type="GO" id="GO:0000175">
    <property type="term" value="F:3'-5'-RNA exonuclease activity"/>
    <property type="evidence" value="ECO:0007669"/>
    <property type="project" value="UniProtKB-UniRule"/>
</dbReference>
<dbReference type="GO" id="GO:0000049">
    <property type="term" value="F:tRNA binding"/>
    <property type="evidence" value="ECO:0007669"/>
    <property type="project" value="UniProtKB-UniRule"/>
</dbReference>
<dbReference type="GO" id="GO:0009022">
    <property type="term" value="F:tRNA nucleotidyltransferase activity"/>
    <property type="evidence" value="ECO:0007669"/>
    <property type="project" value="UniProtKB-UniRule"/>
</dbReference>
<dbReference type="GO" id="GO:0016075">
    <property type="term" value="P:rRNA catabolic process"/>
    <property type="evidence" value="ECO:0007669"/>
    <property type="project" value="UniProtKB-UniRule"/>
</dbReference>
<dbReference type="GO" id="GO:0006364">
    <property type="term" value="P:rRNA processing"/>
    <property type="evidence" value="ECO:0007669"/>
    <property type="project" value="UniProtKB-KW"/>
</dbReference>
<dbReference type="GO" id="GO:0008033">
    <property type="term" value="P:tRNA processing"/>
    <property type="evidence" value="ECO:0007669"/>
    <property type="project" value="UniProtKB-UniRule"/>
</dbReference>
<dbReference type="CDD" id="cd11362">
    <property type="entry name" value="RNase_PH_bact"/>
    <property type="match status" value="1"/>
</dbReference>
<dbReference type="FunFam" id="3.30.230.70:FF:000003">
    <property type="entry name" value="Ribonuclease PH"/>
    <property type="match status" value="1"/>
</dbReference>
<dbReference type="Gene3D" id="3.30.230.70">
    <property type="entry name" value="GHMP Kinase, N-terminal domain"/>
    <property type="match status" value="1"/>
</dbReference>
<dbReference type="HAMAP" id="MF_00564">
    <property type="entry name" value="RNase_PH"/>
    <property type="match status" value="1"/>
</dbReference>
<dbReference type="InterPro" id="IPR001247">
    <property type="entry name" value="ExoRNase_PH_dom1"/>
</dbReference>
<dbReference type="InterPro" id="IPR015847">
    <property type="entry name" value="ExoRNase_PH_dom2"/>
</dbReference>
<dbReference type="InterPro" id="IPR036345">
    <property type="entry name" value="ExoRNase_PH_dom2_sf"/>
</dbReference>
<dbReference type="InterPro" id="IPR027408">
    <property type="entry name" value="PNPase/RNase_PH_dom_sf"/>
</dbReference>
<dbReference type="InterPro" id="IPR020568">
    <property type="entry name" value="Ribosomal_Su5_D2-typ_SF"/>
</dbReference>
<dbReference type="InterPro" id="IPR050080">
    <property type="entry name" value="RNase_PH"/>
</dbReference>
<dbReference type="InterPro" id="IPR002381">
    <property type="entry name" value="RNase_PH_bac-type"/>
</dbReference>
<dbReference type="InterPro" id="IPR018336">
    <property type="entry name" value="RNase_PH_CS"/>
</dbReference>
<dbReference type="NCBIfam" id="TIGR01966">
    <property type="entry name" value="RNasePH"/>
    <property type="match status" value="1"/>
</dbReference>
<dbReference type="PANTHER" id="PTHR11953">
    <property type="entry name" value="EXOSOME COMPLEX COMPONENT"/>
    <property type="match status" value="1"/>
</dbReference>
<dbReference type="PANTHER" id="PTHR11953:SF0">
    <property type="entry name" value="EXOSOME COMPLEX COMPONENT RRP41"/>
    <property type="match status" value="1"/>
</dbReference>
<dbReference type="Pfam" id="PF01138">
    <property type="entry name" value="RNase_PH"/>
    <property type="match status" value="1"/>
</dbReference>
<dbReference type="Pfam" id="PF03725">
    <property type="entry name" value="RNase_PH_C"/>
    <property type="match status" value="1"/>
</dbReference>
<dbReference type="SUPFAM" id="SSF55666">
    <property type="entry name" value="Ribonuclease PH domain 2-like"/>
    <property type="match status" value="1"/>
</dbReference>
<dbReference type="SUPFAM" id="SSF54211">
    <property type="entry name" value="Ribosomal protein S5 domain 2-like"/>
    <property type="match status" value="1"/>
</dbReference>
<dbReference type="PROSITE" id="PS01277">
    <property type="entry name" value="RIBONUCLEASE_PH"/>
    <property type="match status" value="1"/>
</dbReference>
<protein>
    <recommendedName>
        <fullName evidence="1">Ribonuclease PH</fullName>
        <shortName evidence="1">RNase PH</shortName>
        <ecNumber evidence="1">2.7.7.56</ecNumber>
    </recommendedName>
    <alternativeName>
        <fullName evidence="1">tRNA nucleotidyltransferase</fullName>
    </alternativeName>
</protein>
<gene>
    <name evidence="1" type="primary">rph</name>
    <name type="ordered locus">Spro_4847</name>
</gene>
<keyword id="KW-0548">Nucleotidyltransferase</keyword>
<keyword id="KW-0694">RNA-binding</keyword>
<keyword id="KW-0698">rRNA processing</keyword>
<keyword id="KW-0808">Transferase</keyword>
<keyword id="KW-0819">tRNA processing</keyword>
<keyword id="KW-0820">tRNA-binding</keyword>
<evidence type="ECO:0000255" key="1">
    <source>
        <dbReference type="HAMAP-Rule" id="MF_00564"/>
    </source>
</evidence>
<proteinExistence type="inferred from homology"/>
<organism>
    <name type="scientific">Serratia proteamaculans (strain 568)</name>
    <dbReference type="NCBI Taxonomy" id="399741"/>
    <lineage>
        <taxon>Bacteria</taxon>
        <taxon>Pseudomonadati</taxon>
        <taxon>Pseudomonadota</taxon>
        <taxon>Gammaproteobacteria</taxon>
        <taxon>Enterobacterales</taxon>
        <taxon>Yersiniaceae</taxon>
        <taxon>Serratia</taxon>
    </lineage>
</organism>
<reference key="1">
    <citation type="submission" date="2007-09" db="EMBL/GenBank/DDBJ databases">
        <title>Complete sequence of chromosome of Serratia proteamaculans 568.</title>
        <authorList>
            <consortium name="US DOE Joint Genome Institute"/>
            <person name="Copeland A."/>
            <person name="Lucas S."/>
            <person name="Lapidus A."/>
            <person name="Barry K."/>
            <person name="Glavina del Rio T."/>
            <person name="Dalin E."/>
            <person name="Tice H."/>
            <person name="Pitluck S."/>
            <person name="Chain P."/>
            <person name="Malfatti S."/>
            <person name="Shin M."/>
            <person name="Vergez L."/>
            <person name="Schmutz J."/>
            <person name="Larimer F."/>
            <person name="Land M."/>
            <person name="Hauser L."/>
            <person name="Kyrpides N."/>
            <person name="Kim E."/>
            <person name="Taghavi S."/>
            <person name="Newman L."/>
            <person name="Vangronsveld J."/>
            <person name="van der Lelie D."/>
            <person name="Richardson P."/>
        </authorList>
    </citation>
    <scope>NUCLEOTIDE SEQUENCE [LARGE SCALE GENOMIC DNA]</scope>
    <source>
        <strain>568</strain>
    </source>
</reference>
<sequence length="238" mass="25260">MRPAGRAPQQVRPLTLTRHYTKHAEGSVLVEFGDTKVLCTATVEEGVPRFLKGQGQGWITAEYGMLPRSTHSRNAREAAKGKQGGRTLEIQRLIARSLRAAVDLKKLGEFTITLDCDVLQADGGTRTASISGACVALADALNALVANGKLKANPMKGLVAAVSVGIVNGEALCDLEYVEDSAAETDMNVVMMEDGRMIEVQGTAEGEPFSHDELLALLALARGGIDTIFQAQKAALAD</sequence>
<comment type="function">
    <text evidence="1">Phosphorolytic 3'-5' exoribonuclease that plays an important role in tRNA 3'-end maturation. Removes nucleotide residues following the 3'-CCA terminus of tRNAs; can also add nucleotides to the ends of RNA molecules by using nucleoside diphosphates as substrates, but this may not be physiologically important. Probably plays a role in initiation of 16S rRNA degradation (leading to ribosome degradation) during starvation.</text>
</comment>
<comment type="catalytic activity">
    <reaction evidence="1">
        <text>tRNA(n+1) + phosphate = tRNA(n) + a ribonucleoside 5'-diphosphate</text>
        <dbReference type="Rhea" id="RHEA:10628"/>
        <dbReference type="Rhea" id="RHEA-COMP:17343"/>
        <dbReference type="Rhea" id="RHEA-COMP:17344"/>
        <dbReference type="ChEBI" id="CHEBI:43474"/>
        <dbReference type="ChEBI" id="CHEBI:57930"/>
        <dbReference type="ChEBI" id="CHEBI:173114"/>
        <dbReference type="EC" id="2.7.7.56"/>
    </reaction>
</comment>
<comment type="subunit">
    <text evidence="1">Homohexameric ring arranged as a trimer of dimers.</text>
</comment>
<comment type="similarity">
    <text evidence="1">Belongs to the RNase PH family.</text>
</comment>
<accession>A8GLF0</accession>